<accession>A1U1C0</accession>
<organism>
    <name type="scientific">Marinobacter nauticus (strain ATCC 700491 / DSM 11845 / VT8)</name>
    <name type="common">Marinobacter aquaeolei</name>
    <dbReference type="NCBI Taxonomy" id="351348"/>
    <lineage>
        <taxon>Bacteria</taxon>
        <taxon>Pseudomonadati</taxon>
        <taxon>Pseudomonadota</taxon>
        <taxon>Gammaproteobacteria</taxon>
        <taxon>Pseudomonadales</taxon>
        <taxon>Marinobacteraceae</taxon>
        <taxon>Marinobacter</taxon>
    </lineage>
</organism>
<sequence length="209" mass="22350">MIGRIRGMLIEKSPGQALVECSGLGYEIDIPYTTFFHLPETGQEVTLHTHFAVREDAQSLYGFASRLDRNLFRLLIKVNGVGPKLAVGILSGLDAQQFIRCVEARDANSLVKLPGVGKKTAERLLIEMADRIGQLEGQFVPSQPDVPTGAGAATASQAGPDPREEAEAALIALGYKPQEAAKAISKVAGPDMNSETLIRLALKNMIPAG</sequence>
<name>RUVA_MARN8</name>
<evidence type="ECO:0000255" key="1">
    <source>
        <dbReference type="HAMAP-Rule" id="MF_00031"/>
    </source>
</evidence>
<dbReference type="EMBL" id="CP000514">
    <property type="protein sequence ID" value="ABM18789.1"/>
    <property type="molecule type" value="Genomic_DNA"/>
</dbReference>
<dbReference type="RefSeq" id="WP_011785188.1">
    <property type="nucleotide sequence ID" value="NC_008740.1"/>
</dbReference>
<dbReference type="SMR" id="A1U1C0"/>
<dbReference type="STRING" id="351348.Maqu_1705"/>
<dbReference type="KEGG" id="maq:Maqu_1705"/>
<dbReference type="eggNOG" id="COG0632">
    <property type="taxonomic scope" value="Bacteria"/>
</dbReference>
<dbReference type="HOGENOM" id="CLU_087936_0_0_6"/>
<dbReference type="OrthoDB" id="5293449at2"/>
<dbReference type="Proteomes" id="UP000000998">
    <property type="component" value="Chromosome"/>
</dbReference>
<dbReference type="GO" id="GO:0005737">
    <property type="term" value="C:cytoplasm"/>
    <property type="evidence" value="ECO:0007669"/>
    <property type="project" value="UniProtKB-SubCell"/>
</dbReference>
<dbReference type="GO" id="GO:0009379">
    <property type="term" value="C:Holliday junction helicase complex"/>
    <property type="evidence" value="ECO:0007669"/>
    <property type="project" value="InterPro"/>
</dbReference>
<dbReference type="GO" id="GO:0048476">
    <property type="term" value="C:Holliday junction resolvase complex"/>
    <property type="evidence" value="ECO:0007669"/>
    <property type="project" value="UniProtKB-UniRule"/>
</dbReference>
<dbReference type="GO" id="GO:0005524">
    <property type="term" value="F:ATP binding"/>
    <property type="evidence" value="ECO:0007669"/>
    <property type="project" value="InterPro"/>
</dbReference>
<dbReference type="GO" id="GO:0000400">
    <property type="term" value="F:four-way junction DNA binding"/>
    <property type="evidence" value="ECO:0007669"/>
    <property type="project" value="UniProtKB-UniRule"/>
</dbReference>
<dbReference type="GO" id="GO:0009378">
    <property type="term" value="F:four-way junction helicase activity"/>
    <property type="evidence" value="ECO:0007669"/>
    <property type="project" value="InterPro"/>
</dbReference>
<dbReference type="GO" id="GO:0006310">
    <property type="term" value="P:DNA recombination"/>
    <property type="evidence" value="ECO:0007669"/>
    <property type="project" value="UniProtKB-UniRule"/>
</dbReference>
<dbReference type="GO" id="GO:0006281">
    <property type="term" value="P:DNA repair"/>
    <property type="evidence" value="ECO:0007669"/>
    <property type="project" value="UniProtKB-UniRule"/>
</dbReference>
<dbReference type="CDD" id="cd14332">
    <property type="entry name" value="UBA_RuvA_C"/>
    <property type="match status" value="1"/>
</dbReference>
<dbReference type="Gene3D" id="1.10.150.20">
    <property type="entry name" value="5' to 3' exonuclease, C-terminal subdomain"/>
    <property type="match status" value="1"/>
</dbReference>
<dbReference type="Gene3D" id="1.10.8.10">
    <property type="entry name" value="DNA helicase RuvA subunit, C-terminal domain"/>
    <property type="match status" value="1"/>
</dbReference>
<dbReference type="Gene3D" id="2.40.50.140">
    <property type="entry name" value="Nucleic acid-binding proteins"/>
    <property type="match status" value="1"/>
</dbReference>
<dbReference type="HAMAP" id="MF_00031">
    <property type="entry name" value="DNA_HJ_migration_RuvA"/>
    <property type="match status" value="1"/>
</dbReference>
<dbReference type="InterPro" id="IPR013849">
    <property type="entry name" value="DNA_helicase_Holl-junc_RuvA_I"/>
</dbReference>
<dbReference type="InterPro" id="IPR003583">
    <property type="entry name" value="Hlx-hairpin-Hlx_DNA-bd_motif"/>
</dbReference>
<dbReference type="InterPro" id="IPR012340">
    <property type="entry name" value="NA-bd_OB-fold"/>
</dbReference>
<dbReference type="InterPro" id="IPR000085">
    <property type="entry name" value="RuvA"/>
</dbReference>
<dbReference type="InterPro" id="IPR010994">
    <property type="entry name" value="RuvA_2-like"/>
</dbReference>
<dbReference type="InterPro" id="IPR011114">
    <property type="entry name" value="RuvA_C"/>
</dbReference>
<dbReference type="InterPro" id="IPR036267">
    <property type="entry name" value="RuvA_C_sf"/>
</dbReference>
<dbReference type="NCBIfam" id="TIGR00084">
    <property type="entry name" value="ruvA"/>
    <property type="match status" value="1"/>
</dbReference>
<dbReference type="Pfam" id="PF14520">
    <property type="entry name" value="HHH_5"/>
    <property type="match status" value="1"/>
</dbReference>
<dbReference type="Pfam" id="PF07499">
    <property type="entry name" value="RuvA_C"/>
    <property type="match status" value="1"/>
</dbReference>
<dbReference type="Pfam" id="PF01330">
    <property type="entry name" value="RuvA_N"/>
    <property type="match status" value="1"/>
</dbReference>
<dbReference type="SMART" id="SM00278">
    <property type="entry name" value="HhH1"/>
    <property type="match status" value="2"/>
</dbReference>
<dbReference type="SUPFAM" id="SSF46929">
    <property type="entry name" value="DNA helicase RuvA subunit, C-terminal domain"/>
    <property type="match status" value="1"/>
</dbReference>
<dbReference type="SUPFAM" id="SSF50249">
    <property type="entry name" value="Nucleic acid-binding proteins"/>
    <property type="match status" value="1"/>
</dbReference>
<dbReference type="SUPFAM" id="SSF47781">
    <property type="entry name" value="RuvA domain 2-like"/>
    <property type="match status" value="1"/>
</dbReference>
<reference key="1">
    <citation type="journal article" date="2011" name="Appl. Environ. Microbiol.">
        <title>Genomic potential of Marinobacter aquaeolei, a biogeochemical 'opportunitroph'.</title>
        <authorList>
            <person name="Singer E."/>
            <person name="Webb E.A."/>
            <person name="Nelson W.C."/>
            <person name="Heidelberg J.F."/>
            <person name="Ivanova N."/>
            <person name="Pati A."/>
            <person name="Edwards K.J."/>
        </authorList>
    </citation>
    <scope>NUCLEOTIDE SEQUENCE [LARGE SCALE GENOMIC DNA]</scope>
    <source>
        <strain>ATCC 700491 / DSM 11845 / VT8</strain>
    </source>
</reference>
<protein>
    <recommendedName>
        <fullName evidence="1">Holliday junction branch migration complex subunit RuvA</fullName>
    </recommendedName>
</protein>
<feature type="chain" id="PRO_1000002481" description="Holliday junction branch migration complex subunit RuvA">
    <location>
        <begin position="1"/>
        <end position="209"/>
    </location>
</feature>
<feature type="region of interest" description="Domain I" evidence="1">
    <location>
        <begin position="1"/>
        <end position="64"/>
    </location>
</feature>
<feature type="region of interest" description="Domain II" evidence="1">
    <location>
        <begin position="65"/>
        <end position="143"/>
    </location>
</feature>
<feature type="region of interest" description="Flexible linker" evidence="1">
    <location>
        <begin position="144"/>
        <end position="157"/>
    </location>
</feature>
<feature type="region of interest" description="Domain III" evidence="1">
    <location>
        <begin position="158"/>
        <end position="209"/>
    </location>
</feature>
<keyword id="KW-0963">Cytoplasm</keyword>
<keyword id="KW-0227">DNA damage</keyword>
<keyword id="KW-0233">DNA recombination</keyword>
<keyword id="KW-0234">DNA repair</keyword>
<keyword id="KW-0238">DNA-binding</keyword>
<proteinExistence type="inferred from homology"/>
<comment type="function">
    <text evidence="1">The RuvA-RuvB-RuvC complex processes Holliday junction (HJ) DNA during genetic recombination and DNA repair, while the RuvA-RuvB complex plays an important role in the rescue of blocked DNA replication forks via replication fork reversal (RFR). RuvA specifically binds to HJ cruciform DNA, conferring on it an open structure. The RuvB hexamer acts as an ATP-dependent pump, pulling dsDNA into and through the RuvAB complex. HJ branch migration allows RuvC to scan DNA until it finds its consensus sequence, where it cleaves and resolves the cruciform DNA.</text>
</comment>
<comment type="subunit">
    <text evidence="1">Homotetramer. Forms an RuvA(8)-RuvB(12)-Holliday junction (HJ) complex. HJ DNA is sandwiched between 2 RuvA tetramers; dsDNA enters through RuvA and exits via RuvB. An RuvB hexamer assembles on each DNA strand where it exits the tetramer. Each RuvB hexamer is contacted by two RuvA subunits (via domain III) on 2 adjacent RuvB subunits; this complex drives branch migration. In the full resolvosome a probable DNA-RuvA(4)-RuvB(12)-RuvC(2) complex forms which resolves the HJ.</text>
</comment>
<comment type="subcellular location">
    <subcellularLocation>
        <location evidence="1">Cytoplasm</location>
    </subcellularLocation>
</comment>
<comment type="domain">
    <text evidence="1">Has three domains with a flexible linker between the domains II and III and assumes an 'L' shape. Domain III is highly mobile and contacts RuvB.</text>
</comment>
<comment type="similarity">
    <text evidence="1">Belongs to the RuvA family.</text>
</comment>
<gene>
    <name evidence="1" type="primary">ruvA</name>
    <name type="ordered locus">Maqu_1705</name>
</gene>